<keyword id="KW-0963">Cytoplasm</keyword>
<keyword id="KW-0227">DNA damage</keyword>
<keyword id="KW-0234">DNA repair</keyword>
<keyword id="KW-0378">Hydrolase</keyword>
<keyword id="KW-1185">Reference proteome</keyword>
<evidence type="ECO:0000255" key="1">
    <source>
        <dbReference type="HAMAP-Rule" id="MF_00148"/>
    </source>
</evidence>
<gene>
    <name evidence="1" type="primary">ung</name>
    <name type="ordered locus">CFPG_374</name>
</gene>
<reference key="1">
    <citation type="journal article" date="2008" name="Science">
        <title>Genome of an endosymbiont coupling N2 fixation to cellulolysis within RT protist cells in termite gut.</title>
        <authorList>
            <person name="Hongoh Y."/>
            <person name="Sharma V.K."/>
            <person name="Prakash T."/>
            <person name="Noda S."/>
            <person name="Toh H."/>
            <person name="Taylor T.D."/>
            <person name="Kudo T."/>
            <person name="Sakaki Y."/>
            <person name="Toyoda A."/>
            <person name="Hattori M."/>
            <person name="Ohkuma M."/>
        </authorList>
    </citation>
    <scope>NUCLEOTIDE SEQUENCE [LARGE SCALE GENOMIC DNA]</scope>
</reference>
<sequence>MNVKIEQSWRKYLVPEFEKPYFKQLVEFIKNEYASKIIYPKGNKIFSAFDKTPLDRVKVVILGQDPYHEPGQANGLCFSVNEGIPLPPSLQNIYKEVKDDIGIVSSTSGNLERWSEQGVLLLNATLTVQAHKAGSHQKKGWEKFTDAIIHIILKEKQHIVFILWGTYAQKKGAFIPSDKHLILKSAHPSPFSANKGFFGSKPFSKTNDYLKKTGQTVITW</sequence>
<dbReference type="EC" id="3.2.2.27" evidence="1"/>
<dbReference type="EMBL" id="AP010656">
    <property type="protein sequence ID" value="BAG83637.1"/>
    <property type="molecule type" value="Genomic_DNA"/>
</dbReference>
<dbReference type="RefSeq" id="WP_012573398.1">
    <property type="nucleotide sequence ID" value="NC_011565.1"/>
</dbReference>
<dbReference type="SMR" id="B6YR15"/>
<dbReference type="STRING" id="511995.CFPG_374"/>
<dbReference type="KEGG" id="aps:CFPG_374"/>
<dbReference type="eggNOG" id="COG0692">
    <property type="taxonomic scope" value="Bacteria"/>
</dbReference>
<dbReference type="HOGENOM" id="CLU_032162_3_0_10"/>
<dbReference type="OrthoDB" id="9804372at2"/>
<dbReference type="Proteomes" id="UP000000723">
    <property type="component" value="Chromosome"/>
</dbReference>
<dbReference type="GO" id="GO:0005737">
    <property type="term" value="C:cytoplasm"/>
    <property type="evidence" value="ECO:0007669"/>
    <property type="project" value="UniProtKB-SubCell"/>
</dbReference>
<dbReference type="GO" id="GO:0004844">
    <property type="term" value="F:uracil DNA N-glycosylase activity"/>
    <property type="evidence" value="ECO:0007669"/>
    <property type="project" value="UniProtKB-UniRule"/>
</dbReference>
<dbReference type="GO" id="GO:0097510">
    <property type="term" value="P:base-excision repair, AP site formation via deaminated base removal"/>
    <property type="evidence" value="ECO:0007669"/>
    <property type="project" value="TreeGrafter"/>
</dbReference>
<dbReference type="CDD" id="cd10027">
    <property type="entry name" value="UDG-F1-like"/>
    <property type="match status" value="1"/>
</dbReference>
<dbReference type="FunFam" id="3.40.470.10:FF:000001">
    <property type="entry name" value="Uracil-DNA glycosylase"/>
    <property type="match status" value="1"/>
</dbReference>
<dbReference type="Gene3D" id="3.40.470.10">
    <property type="entry name" value="Uracil-DNA glycosylase-like domain"/>
    <property type="match status" value="1"/>
</dbReference>
<dbReference type="HAMAP" id="MF_00148">
    <property type="entry name" value="UDG"/>
    <property type="match status" value="1"/>
</dbReference>
<dbReference type="InterPro" id="IPR002043">
    <property type="entry name" value="UDG_fam1"/>
</dbReference>
<dbReference type="InterPro" id="IPR018085">
    <property type="entry name" value="Ura-DNA_Glyclase_AS"/>
</dbReference>
<dbReference type="InterPro" id="IPR005122">
    <property type="entry name" value="Uracil-DNA_glycosylase-like"/>
</dbReference>
<dbReference type="InterPro" id="IPR036895">
    <property type="entry name" value="Uracil-DNA_glycosylase-like_sf"/>
</dbReference>
<dbReference type="NCBIfam" id="NF003588">
    <property type="entry name" value="PRK05254.1-1"/>
    <property type="match status" value="1"/>
</dbReference>
<dbReference type="NCBIfam" id="NF003589">
    <property type="entry name" value="PRK05254.1-2"/>
    <property type="match status" value="1"/>
</dbReference>
<dbReference type="NCBIfam" id="NF003591">
    <property type="entry name" value="PRK05254.1-4"/>
    <property type="match status" value="1"/>
</dbReference>
<dbReference type="NCBIfam" id="NF003592">
    <property type="entry name" value="PRK05254.1-5"/>
    <property type="match status" value="1"/>
</dbReference>
<dbReference type="NCBIfam" id="TIGR00628">
    <property type="entry name" value="ung"/>
    <property type="match status" value="1"/>
</dbReference>
<dbReference type="PANTHER" id="PTHR11264">
    <property type="entry name" value="URACIL-DNA GLYCOSYLASE"/>
    <property type="match status" value="1"/>
</dbReference>
<dbReference type="PANTHER" id="PTHR11264:SF0">
    <property type="entry name" value="URACIL-DNA GLYCOSYLASE"/>
    <property type="match status" value="1"/>
</dbReference>
<dbReference type="Pfam" id="PF03167">
    <property type="entry name" value="UDG"/>
    <property type="match status" value="1"/>
</dbReference>
<dbReference type="SMART" id="SM00986">
    <property type="entry name" value="UDG"/>
    <property type="match status" value="1"/>
</dbReference>
<dbReference type="SMART" id="SM00987">
    <property type="entry name" value="UreE_C"/>
    <property type="match status" value="1"/>
</dbReference>
<dbReference type="SUPFAM" id="SSF52141">
    <property type="entry name" value="Uracil-DNA glycosylase-like"/>
    <property type="match status" value="1"/>
</dbReference>
<dbReference type="PROSITE" id="PS00130">
    <property type="entry name" value="U_DNA_GLYCOSYLASE"/>
    <property type="match status" value="1"/>
</dbReference>
<proteinExistence type="inferred from homology"/>
<protein>
    <recommendedName>
        <fullName evidence="1">Uracil-DNA glycosylase</fullName>
        <shortName evidence="1">UDG</shortName>
        <ecNumber evidence="1">3.2.2.27</ecNumber>
    </recommendedName>
</protein>
<name>UNG_AZOPC</name>
<feature type="chain" id="PRO_1000096564" description="Uracil-DNA glycosylase">
    <location>
        <begin position="1"/>
        <end position="220"/>
    </location>
</feature>
<feature type="active site" description="Proton acceptor" evidence="1">
    <location>
        <position position="65"/>
    </location>
</feature>
<comment type="function">
    <text evidence="1">Excises uracil residues from the DNA which can arise as a result of misincorporation of dUMP residues by DNA polymerase or due to deamination of cytosine.</text>
</comment>
<comment type="catalytic activity">
    <reaction evidence="1">
        <text>Hydrolyzes single-stranded DNA or mismatched double-stranded DNA and polynucleotides, releasing free uracil.</text>
        <dbReference type="EC" id="3.2.2.27"/>
    </reaction>
</comment>
<comment type="subcellular location">
    <subcellularLocation>
        <location evidence="1">Cytoplasm</location>
    </subcellularLocation>
</comment>
<comment type="similarity">
    <text evidence="1">Belongs to the uracil-DNA glycosylase (UDG) superfamily. UNG family.</text>
</comment>
<accession>B6YR15</accession>
<organism>
    <name type="scientific">Azobacteroides pseudotrichonymphae genomovar. CFP2</name>
    <dbReference type="NCBI Taxonomy" id="511995"/>
    <lineage>
        <taxon>Bacteria</taxon>
        <taxon>Pseudomonadati</taxon>
        <taxon>Bacteroidota</taxon>
        <taxon>Bacteroidia</taxon>
        <taxon>Bacteroidales</taxon>
        <taxon>Candidatus Azobacteroides</taxon>
    </lineage>
</organism>